<feature type="chain" id="PRO_0000186776" description="Endogenous retrovirus group K member 19 Rec protein">
    <location>
        <begin position="1"/>
        <end position="105"/>
    </location>
</feature>
<feature type="region of interest" description="Disordered" evidence="3">
    <location>
        <begin position="1"/>
        <end position="49"/>
    </location>
</feature>
<feature type="short sequence motif" description="Nuclear localization signal" evidence="2">
    <location>
        <begin position="13"/>
        <end position="20"/>
    </location>
</feature>
<feature type="short sequence motif" description="Nuclear export signal" evidence="2">
    <location>
        <begin position="50"/>
        <end position="59"/>
    </location>
</feature>
<feature type="compositionally biased region" description="Basic residues" evidence="3">
    <location>
        <begin position="10"/>
        <end position="20"/>
    </location>
</feature>
<keyword id="KW-0963">Cytoplasm</keyword>
<keyword id="KW-0895">ERV</keyword>
<keyword id="KW-0509">mRNA transport</keyword>
<keyword id="KW-0539">Nucleus</keyword>
<keyword id="KW-1185">Reference proteome</keyword>
<keyword id="KW-0694">RNA-binding</keyword>
<keyword id="KW-0813">Transport</keyword>
<keyword id="KW-0814">Transposable element</keyword>
<proteinExistence type="evidence at protein level"/>
<evidence type="ECO:0000250" key="1"/>
<evidence type="ECO:0000255" key="2"/>
<evidence type="ECO:0000256" key="3">
    <source>
        <dbReference type="SAM" id="MobiDB-lite"/>
    </source>
</evidence>
<protein>
    <recommendedName>
        <fullName>Endogenous retrovirus group K member 19 Rec protein</fullName>
    </recommendedName>
    <alternativeName>
        <fullName>HERV-K(C19) Rec protein</fullName>
    </alternativeName>
    <alternativeName>
        <fullName>HERV-K_19q11 provirus Rec protein</fullName>
    </alternativeName>
</protein>
<dbReference type="EMBL" id="AC112702">
    <property type="status" value="NOT_ANNOTATED_CDS"/>
    <property type="molecule type" value="Genomic_DNA"/>
</dbReference>
<dbReference type="EMBL" id="Y17833">
    <property type="status" value="NOT_ANNOTATED_CDS"/>
    <property type="molecule type" value="Genomic_DNA"/>
</dbReference>
<dbReference type="SMR" id="P61572"/>
<dbReference type="BioMuta" id="HGNC:39026"/>
<dbReference type="MassIVE" id="P61572"/>
<dbReference type="PeptideAtlas" id="P61572"/>
<dbReference type="GeneCards" id="ERVK-19"/>
<dbReference type="HGNC" id="HGNC:39026">
    <property type="gene designation" value="ERVK-19"/>
</dbReference>
<dbReference type="neXtProt" id="NX_P61572"/>
<dbReference type="PhylomeDB" id="P61572"/>
<dbReference type="Pharos" id="P61572">
    <property type="development level" value="Tdark"/>
</dbReference>
<dbReference type="Proteomes" id="UP000005640">
    <property type="component" value="Unplaced"/>
</dbReference>
<dbReference type="GO" id="GO:0005737">
    <property type="term" value="C:cytoplasm"/>
    <property type="evidence" value="ECO:0007669"/>
    <property type="project" value="UniProtKB-SubCell"/>
</dbReference>
<dbReference type="GO" id="GO:0005730">
    <property type="term" value="C:nucleolus"/>
    <property type="evidence" value="ECO:0007669"/>
    <property type="project" value="UniProtKB-SubCell"/>
</dbReference>
<dbReference type="GO" id="GO:0003723">
    <property type="term" value="F:RNA binding"/>
    <property type="evidence" value="ECO:0007669"/>
    <property type="project" value="UniProtKB-KW"/>
</dbReference>
<dbReference type="GO" id="GO:0051028">
    <property type="term" value="P:mRNA transport"/>
    <property type="evidence" value="ECO:0007669"/>
    <property type="project" value="UniProtKB-KW"/>
</dbReference>
<dbReference type="Pfam" id="PF15695">
    <property type="entry name" value="HERV-K_REC"/>
    <property type="match status" value="1"/>
</dbReference>
<organism>
    <name type="scientific">Homo sapiens</name>
    <name type="common">Human</name>
    <dbReference type="NCBI Taxonomy" id="9606"/>
    <lineage>
        <taxon>Eukaryota</taxon>
        <taxon>Metazoa</taxon>
        <taxon>Chordata</taxon>
        <taxon>Craniata</taxon>
        <taxon>Vertebrata</taxon>
        <taxon>Euteleostomi</taxon>
        <taxon>Mammalia</taxon>
        <taxon>Eutheria</taxon>
        <taxon>Euarchontoglires</taxon>
        <taxon>Primates</taxon>
        <taxon>Haplorrhini</taxon>
        <taxon>Catarrhini</taxon>
        <taxon>Hominidae</taxon>
        <taxon>Homo</taxon>
    </lineage>
</organism>
<sequence length="105" mass="11828">MNPSEMQRKAPPRRRRHRNRAPLTHKMNKMVTSEEQMKLPSTKKAEPPTWAQLKKLTQLATKYLENTKVTQTPESMLLAALMIVSMVSAGVPNSSEETATIENGP</sequence>
<comment type="function">
    <text evidence="1">Retroviral replication requires the nuclear export and translation of unspliced, singly-spliced and multiply-spliced derivatives of the initial genomic transcript. Rec interacts with a highly structured RNA element (RcRE) present in the viral 3'LTR and recruits the cellular nuclear export machinery. This permits export to the cytoplasm of unspliced genomic or incompletely spliced subgenomic viral transcripts (By similarity).</text>
</comment>
<comment type="subunit">
    <text evidence="1">Forms homodimers, homotrimers, and homotetramers via a C-terminal domain. Associates with XPO1 and with ZNF145 (By similarity).</text>
</comment>
<comment type="subcellular location">
    <subcellularLocation>
        <location evidence="1">Cytoplasm</location>
    </subcellularLocation>
    <subcellularLocation>
        <location evidence="1">Nucleus</location>
        <location evidence="1">Nucleolus</location>
    </subcellularLocation>
    <text evidence="1">Shuttles between the nucleus and the cytoplasm. When in the nucleus, resides in the nucleolus (By similarity).</text>
</comment>
<comment type="miscellaneous">
    <text>Despite functional similarity, Rec shares almost no sequence homology with HIV-1 Rev and HTLV-1 Rex.</text>
</comment>
<comment type="miscellaneous">
    <text>ERVK-19 has a type 2 genome. The HERV-K(HML-2) family contains type 1 and type 2 genomes depending on the absence or presence of 292 nucleotides at the 5'-end of the env gene. Rec proteins are translated from a doubly spliced transcript expressed exclusively by HERV-K(HML-2) type 2 proviral genomes. The first exon comprises the 87 N-terminal amino acids of the HERV-K(HMLM-2) type 2 envelope protein. The second exon (18 amino acids) is positioned in the 3' part of the proviral genome.</text>
</comment>
<reference key="1">
    <citation type="journal article" date="2004" name="Nature">
        <title>The DNA sequence and biology of human chromosome 19.</title>
        <authorList>
            <person name="Grimwood J."/>
            <person name="Gordon L.A."/>
            <person name="Olsen A.S."/>
            <person name="Terry A."/>
            <person name="Schmutz J."/>
            <person name="Lamerdin J.E."/>
            <person name="Hellsten U."/>
            <person name="Goodstein D."/>
            <person name="Couronne O."/>
            <person name="Tran-Gyamfi M."/>
            <person name="Aerts A."/>
            <person name="Altherr M."/>
            <person name="Ashworth L."/>
            <person name="Bajorek E."/>
            <person name="Black S."/>
            <person name="Branscomb E."/>
            <person name="Caenepeel S."/>
            <person name="Carrano A.V."/>
            <person name="Caoile C."/>
            <person name="Chan Y.M."/>
            <person name="Christensen M."/>
            <person name="Cleland C.A."/>
            <person name="Copeland A."/>
            <person name="Dalin E."/>
            <person name="Dehal P."/>
            <person name="Denys M."/>
            <person name="Detter J.C."/>
            <person name="Escobar J."/>
            <person name="Flowers D."/>
            <person name="Fotopulos D."/>
            <person name="Garcia C."/>
            <person name="Georgescu A.M."/>
            <person name="Glavina T."/>
            <person name="Gomez M."/>
            <person name="Gonzales E."/>
            <person name="Groza M."/>
            <person name="Hammon N."/>
            <person name="Hawkins T."/>
            <person name="Haydu L."/>
            <person name="Ho I."/>
            <person name="Huang W."/>
            <person name="Israni S."/>
            <person name="Jett J."/>
            <person name="Kadner K."/>
            <person name="Kimball H."/>
            <person name="Kobayashi A."/>
            <person name="Larionov V."/>
            <person name="Leem S.-H."/>
            <person name="Lopez F."/>
            <person name="Lou Y."/>
            <person name="Lowry S."/>
            <person name="Malfatti S."/>
            <person name="Martinez D."/>
            <person name="McCready P.M."/>
            <person name="Medina C."/>
            <person name="Morgan J."/>
            <person name="Nelson K."/>
            <person name="Nolan M."/>
            <person name="Ovcharenko I."/>
            <person name="Pitluck S."/>
            <person name="Pollard M."/>
            <person name="Popkie A.P."/>
            <person name="Predki P."/>
            <person name="Quan G."/>
            <person name="Ramirez L."/>
            <person name="Rash S."/>
            <person name="Retterer J."/>
            <person name="Rodriguez A."/>
            <person name="Rogers S."/>
            <person name="Salamov A."/>
            <person name="Salazar A."/>
            <person name="She X."/>
            <person name="Smith D."/>
            <person name="Slezak T."/>
            <person name="Solovyev V."/>
            <person name="Thayer N."/>
            <person name="Tice H."/>
            <person name="Tsai M."/>
            <person name="Ustaszewska A."/>
            <person name="Vo N."/>
            <person name="Wagner M."/>
            <person name="Wheeler J."/>
            <person name="Wu K."/>
            <person name="Xie G."/>
            <person name="Yang J."/>
            <person name="Dubchak I."/>
            <person name="Furey T.S."/>
            <person name="DeJong P."/>
            <person name="Dickson M."/>
            <person name="Gordon D."/>
            <person name="Eichler E.E."/>
            <person name="Pennacchio L.A."/>
            <person name="Richardson P."/>
            <person name="Stubbs L."/>
            <person name="Rokhsar D.S."/>
            <person name="Myers R.M."/>
            <person name="Rubin E.M."/>
            <person name="Lucas S.M."/>
        </authorList>
    </citation>
    <scope>NUCLEOTIDE SEQUENCE [LARGE SCALE GENOMIC DNA]</scope>
</reference>
<reference key="2">
    <citation type="journal article" date="1999" name="J. Virol.">
        <title>Genome wide screening, cloning, chromosomal assignment and expression of full-length human endogenous retrovirus type K (HERV-K).</title>
        <authorList>
            <person name="Toenjes R.R."/>
            <person name="Czauderna F."/>
            <person name="Kurth R."/>
        </authorList>
    </citation>
    <scope>NUCLEOTIDE SEQUENCE [GENOMIC DNA]</scope>
</reference>
<reference key="3">
    <citation type="journal article" date="2004" name="Virology">
        <title>Human endogenous retrovirus HERV-K(HML-2) proviruses with Rec protein coding capacity and transcriptional activity.</title>
        <authorList>
            <person name="Mayer J."/>
            <person name="Ehlhardt S."/>
            <person name="Seifert M."/>
            <person name="Sauter M."/>
            <person name="Mueller-Lantzsch N."/>
            <person name="Mehraein Y."/>
            <person name="Zang K.-D."/>
            <person name="Meese E.U."/>
        </authorList>
    </citation>
    <scope>CHARACTERIZATION</scope>
</reference>
<accession>P61572</accession>
<name>REC19_HUMAN</name>
<gene>
    <name type="primary">ERVK-19</name>
</gene>